<name>UXUA_PHOPR</name>
<comment type="function">
    <text evidence="1">Catalyzes the dehydration of D-mannonate.</text>
</comment>
<comment type="catalytic activity">
    <reaction evidence="1">
        <text>D-mannonate = 2-dehydro-3-deoxy-D-gluconate + H2O</text>
        <dbReference type="Rhea" id="RHEA:20097"/>
        <dbReference type="ChEBI" id="CHEBI:15377"/>
        <dbReference type="ChEBI" id="CHEBI:17767"/>
        <dbReference type="ChEBI" id="CHEBI:57990"/>
        <dbReference type="EC" id="4.2.1.8"/>
    </reaction>
</comment>
<comment type="cofactor">
    <cofactor evidence="1">
        <name>Fe(2+)</name>
        <dbReference type="ChEBI" id="CHEBI:29033"/>
    </cofactor>
    <cofactor evidence="1">
        <name>Mn(2+)</name>
        <dbReference type="ChEBI" id="CHEBI:29035"/>
    </cofactor>
</comment>
<comment type="pathway">
    <text evidence="1">Carbohydrate metabolism; pentose and glucuronate interconversion.</text>
</comment>
<comment type="similarity">
    <text evidence="1">Belongs to the mannonate dehydratase family.</text>
</comment>
<proteinExistence type="inferred from homology"/>
<keyword id="KW-0408">Iron</keyword>
<keyword id="KW-0456">Lyase</keyword>
<keyword id="KW-0464">Manganese</keyword>
<keyword id="KW-1185">Reference proteome</keyword>
<sequence>MEQTWRWYGPNDPVSLNDIRQAGATGIVNALHHIPNGEVWTKEEILIRKALIEDKGLTWSVVESVPVHEEIKTQTGNYQLWIDNYKQTLRNLAECGIDTVCYNFMPVLDWTRTDLEFEMDDGSKALRFDQIAFAAFELHILKRPSAEGAYSDEEQAQAKIYFDNMSDADIAKLTGNIIAGLPGAEEGYTLQEFQAQLDLYDGITKDKLREHMVYFLKELMPICDANGLKMAVHPDDPPRPILGLPRIVSTIEDIDWLTAEVPSQMNGITMCTGSYGARGDNDLVNMIRQHGDRIYFTHLRSTQREDNQLSFHEAAHLDGDVDMYNVVMEILKEEQRRDDAGDVRLIPMRPDHGHQMLDDLNKKTNPGYSAIGRLKGLAEVRGLEMALKRAFFTK</sequence>
<reference key="1">
    <citation type="journal article" date="2005" name="Science">
        <title>Life at depth: Photobacterium profundum genome sequence and expression analysis.</title>
        <authorList>
            <person name="Vezzi A."/>
            <person name="Campanaro S."/>
            <person name="D'Angelo M."/>
            <person name="Simonato F."/>
            <person name="Vitulo N."/>
            <person name="Lauro F.M."/>
            <person name="Cestaro A."/>
            <person name="Malacrida G."/>
            <person name="Simionati B."/>
            <person name="Cannata N."/>
            <person name="Romualdi C."/>
            <person name="Bartlett D.H."/>
            <person name="Valle G."/>
        </authorList>
    </citation>
    <scope>NUCLEOTIDE SEQUENCE [LARGE SCALE GENOMIC DNA]</scope>
    <source>
        <strain>ATCC BAA-1253 / SS9</strain>
    </source>
</reference>
<evidence type="ECO:0000255" key="1">
    <source>
        <dbReference type="HAMAP-Rule" id="MF_00106"/>
    </source>
</evidence>
<dbReference type="EC" id="4.2.1.8" evidence="1"/>
<dbReference type="EMBL" id="CR378680">
    <property type="protein sequence ID" value="CAG23724.1"/>
    <property type="molecule type" value="Genomic_DNA"/>
</dbReference>
<dbReference type="RefSeq" id="WP_011221864.1">
    <property type="nucleotide sequence ID" value="NC_006371.1"/>
</dbReference>
<dbReference type="SMR" id="Q6LG56"/>
<dbReference type="STRING" id="298386.PBPRB1874"/>
<dbReference type="KEGG" id="ppr:PBPRB1874"/>
<dbReference type="eggNOG" id="COG1312">
    <property type="taxonomic scope" value="Bacteria"/>
</dbReference>
<dbReference type="HOGENOM" id="CLU_058621_2_0_6"/>
<dbReference type="UniPathway" id="UPA00246"/>
<dbReference type="Proteomes" id="UP000000593">
    <property type="component" value="Chromosome 2"/>
</dbReference>
<dbReference type="GO" id="GO:0008198">
    <property type="term" value="F:ferrous iron binding"/>
    <property type="evidence" value="ECO:0007669"/>
    <property type="project" value="TreeGrafter"/>
</dbReference>
<dbReference type="GO" id="GO:0030145">
    <property type="term" value="F:manganese ion binding"/>
    <property type="evidence" value="ECO:0007669"/>
    <property type="project" value="TreeGrafter"/>
</dbReference>
<dbReference type="GO" id="GO:0008927">
    <property type="term" value="F:mannonate dehydratase activity"/>
    <property type="evidence" value="ECO:0007669"/>
    <property type="project" value="UniProtKB-UniRule"/>
</dbReference>
<dbReference type="GO" id="GO:0042840">
    <property type="term" value="P:D-glucuronate catabolic process"/>
    <property type="evidence" value="ECO:0007669"/>
    <property type="project" value="TreeGrafter"/>
</dbReference>
<dbReference type="FunFam" id="3.20.20.150:FF:000010">
    <property type="entry name" value="Mannonate dehydratase"/>
    <property type="match status" value="1"/>
</dbReference>
<dbReference type="Gene3D" id="3.20.20.150">
    <property type="entry name" value="Divalent-metal-dependent TIM barrel enzymes"/>
    <property type="match status" value="1"/>
</dbReference>
<dbReference type="HAMAP" id="MF_00106">
    <property type="entry name" value="UxuA"/>
    <property type="match status" value="1"/>
</dbReference>
<dbReference type="InterPro" id="IPR004628">
    <property type="entry name" value="Man_deHydtase"/>
</dbReference>
<dbReference type="InterPro" id="IPR036237">
    <property type="entry name" value="Xyl_isomerase-like_sf"/>
</dbReference>
<dbReference type="NCBIfam" id="NF003027">
    <property type="entry name" value="PRK03906.1"/>
    <property type="match status" value="1"/>
</dbReference>
<dbReference type="NCBIfam" id="TIGR00695">
    <property type="entry name" value="uxuA"/>
    <property type="match status" value="1"/>
</dbReference>
<dbReference type="PANTHER" id="PTHR30387">
    <property type="entry name" value="MANNONATE DEHYDRATASE"/>
    <property type="match status" value="1"/>
</dbReference>
<dbReference type="PANTHER" id="PTHR30387:SF2">
    <property type="entry name" value="MANNONATE DEHYDRATASE"/>
    <property type="match status" value="1"/>
</dbReference>
<dbReference type="Pfam" id="PF03786">
    <property type="entry name" value="UxuA"/>
    <property type="match status" value="1"/>
</dbReference>
<dbReference type="PIRSF" id="PIRSF016049">
    <property type="entry name" value="Man_dehyd"/>
    <property type="match status" value="1"/>
</dbReference>
<dbReference type="SUPFAM" id="SSF51658">
    <property type="entry name" value="Xylose isomerase-like"/>
    <property type="match status" value="1"/>
</dbReference>
<feature type="chain" id="PRO_0000170680" description="Mannonate dehydratase">
    <location>
        <begin position="1"/>
        <end position="394"/>
    </location>
</feature>
<organism>
    <name type="scientific">Photobacterium profundum (strain SS9)</name>
    <dbReference type="NCBI Taxonomy" id="298386"/>
    <lineage>
        <taxon>Bacteria</taxon>
        <taxon>Pseudomonadati</taxon>
        <taxon>Pseudomonadota</taxon>
        <taxon>Gammaproteobacteria</taxon>
        <taxon>Vibrionales</taxon>
        <taxon>Vibrionaceae</taxon>
        <taxon>Photobacterium</taxon>
    </lineage>
</organism>
<protein>
    <recommendedName>
        <fullName evidence="1">Mannonate dehydratase</fullName>
        <ecNumber evidence="1">4.2.1.8</ecNumber>
    </recommendedName>
    <alternativeName>
        <fullName evidence="1">D-mannonate hydro-lyase</fullName>
    </alternativeName>
</protein>
<accession>Q6LG56</accession>
<gene>
    <name evidence="1" type="primary">uxuA</name>
    <name type="ordered locus">PBPRB1874</name>
</gene>